<protein>
    <recommendedName>
        <fullName>Nuclear factor 1 B-type</fullName>
        <shortName>NF1-B</shortName>
        <shortName>Nuclear factor 1/B</shortName>
    </recommendedName>
    <alternativeName>
        <fullName>CCAAT-box-binding transcription factor</fullName>
        <shortName>CTF</shortName>
    </alternativeName>
    <alternativeName>
        <fullName>Nuclear factor I/B</fullName>
        <shortName>NF-I/B</shortName>
        <shortName>NFI-B</shortName>
    </alternativeName>
    <alternativeName>
        <fullName>TGGCA-binding protein</fullName>
    </alternativeName>
</protein>
<reference key="1">
    <citation type="journal article" date="1988" name="Proc. Natl. Acad. Sci. U.S.A.">
        <title>Multiple genes encode nuclear factor 1-like proteins that bind to the promoter for 3-hydroxy-3-methylglutaryl-coenzyme A reductase.</title>
        <authorList>
            <person name="Gil G."/>
            <person name="Smith J.R."/>
            <person name="Goldstein J.L."/>
            <person name="Slaughter C.A."/>
            <person name="Orth K."/>
            <person name="Brown M.S."/>
            <person name="Osborne T.F."/>
        </authorList>
    </citation>
    <scope>NUCLEOTIDE SEQUENCE [MRNA]</scope>
</reference>
<organism>
    <name type="scientific">Mesocricetus auratus</name>
    <name type="common">Golden hamster</name>
    <dbReference type="NCBI Taxonomy" id="10036"/>
    <lineage>
        <taxon>Eukaryota</taxon>
        <taxon>Metazoa</taxon>
        <taxon>Chordata</taxon>
        <taxon>Craniata</taxon>
        <taxon>Vertebrata</taxon>
        <taxon>Euteleostomi</taxon>
        <taxon>Mammalia</taxon>
        <taxon>Eutheria</taxon>
        <taxon>Euarchontoglires</taxon>
        <taxon>Glires</taxon>
        <taxon>Rodentia</taxon>
        <taxon>Myomorpha</taxon>
        <taxon>Muroidea</taxon>
        <taxon>Cricetidae</taxon>
        <taxon>Cricetinae</taxon>
        <taxon>Mesocricetus</taxon>
    </lineage>
</organism>
<keyword id="KW-0010">Activator</keyword>
<keyword id="KW-0025">Alternative splicing</keyword>
<keyword id="KW-0235">DNA replication</keyword>
<keyword id="KW-0238">DNA-binding</keyword>
<keyword id="KW-0488">Methylation</keyword>
<keyword id="KW-0539">Nucleus</keyword>
<keyword id="KW-0597">Phosphoprotein</keyword>
<keyword id="KW-1185">Reference proteome</keyword>
<keyword id="KW-0804">Transcription</keyword>
<keyword id="KW-0805">Transcription regulation</keyword>
<name>NFIB_MESAU</name>
<proteinExistence type="evidence at transcript level"/>
<dbReference type="EMBL" id="J04122">
    <property type="protein sequence ID" value="AAA37082.1"/>
    <property type="molecule type" value="mRNA"/>
</dbReference>
<dbReference type="PIR" id="A31256">
    <property type="entry name" value="A31256"/>
</dbReference>
<dbReference type="RefSeq" id="NP_001268624.1">
    <molecule id="P13622-1"/>
    <property type="nucleotide sequence ID" value="NM_001281695.1"/>
</dbReference>
<dbReference type="SMR" id="P13622"/>
<dbReference type="STRING" id="10036.ENSMAUP00000005608"/>
<dbReference type="GeneID" id="101825256"/>
<dbReference type="KEGG" id="maua:101825256"/>
<dbReference type="CTD" id="4781"/>
<dbReference type="eggNOG" id="KOG3663">
    <property type="taxonomic scope" value="Eukaryota"/>
</dbReference>
<dbReference type="OrthoDB" id="10055441at2759"/>
<dbReference type="Proteomes" id="UP000189706">
    <property type="component" value="Unplaced"/>
</dbReference>
<dbReference type="GO" id="GO:0044300">
    <property type="term" value="C:cerebellar mossy fiber"/>
    <property type="evidence" value="ECO:0000250"/>
    <property type="project" value="UniProtKB"/>
</dbReference>
<dbReference type="GO" id="GO:0005634">
    <property type="term" value="C:nucleus"/>
    <property type="evidence" value="ECO:0000250"/>
    <property type="project" value="UniProtKB"/>
</dbReference>
<dbReference type="GO" id="GO:0003677">
    <property type="term" value="F:DNA binding"/>
    <property type="evidence" value="ECO:0000250"/>
    <property type="project" value="UniProtKB"/>
</dbReference>
<dbReference type="GO" id="GO:0000981">
    <property type="term" value="F:DNA-binding transcription factor activity, RNA polymerase II-specific"/>
    <property type="evidence" value="ECO:0000250"/>
    <property type="project" value="UniProtKB"/>
</dbReference>
<dbReference type="GO" id="GO:0000978">
    <property type="term" value="F:RNA polymerase II cis-regulatory region sequence-specific DNA binding"/>
    <property type="evidence" value="ECO:0007669"/>
    <property type="project" value="TreeGrafter"/>
</dbReference>
<dbReference type="GO" id="GO:0021960">
    <property type="term" value="P:anterior commissure morphogenesis"/>
    <property type="evidence" value="ECO:0000250"/>
    <property type="project" value="UniProtKB"/>
</dbReference>
<dbReference type="GO" id="GO:0002062">
    <property type="term" value="P:chondrocyte differentiation"/>
    <property type="evidence" value="ECO:0000250"/>
    <property type="project" value="UniProtKB"/>
</dbReference>
<dbReference type="GO" id="GO:0060486">
    <property type="term" value="P:club cell differentiation"/>
    <property type="evidence" value="ECO:0000250"/>
    <property type="project" value="UniProtKB"/>
</dbReference>
<dbReference type="GO" id="GO:0071679">
    <property type="term" value="P:commissural neuron axon guidance"/>
    <property type="evidence" value="ECO:0000250"/>
    <property type="project" value="UniProtKB"/>
</dbReference>
<dbReference type="GO" id="GO:0006260">
    <property type="term" value="P:DNA replication"/>
    <property type="evidence" value="ECO:0007669"/>
    <property type="project" value="UniProtKB-KW"/>
</dbReference>
<dbReference type="GO" id="GO:0010001">
    <property type="term" value="P:glial cell differentiation"/>
    <property type="evidence" value="ECO:0000250"/>
    <property type="project" value="UniProtKB"/>
</dbReference>
<dbReference type="GO" id="GO:0061141">
    <property type="term" value="P:lung ciliated cell differentiation"/>
    <property type="evidence" value="ECO:0000250"/>
    <property type="project" value="UniProtKB"/>
</dbReference>
<dbReference type="GO" id="GO:2000795">
    <property type="term" value="P:negative regulation of epithelial cell proliferation involved in lung morphogenesis"/>
    <property type="evidence" value="ECO:0000250"/>
    <property type="project" value="UniProtKB"/>
</dbReference>
<dbReference type="GO" id="GO:2000791">
    <property type="term" value="P:negative regulation of mesenchymal cell proliferation involved in lung development"/>
    <property type="evidence" value="ECO:0000250"/>
    <property type="project" value="UniProtKB"/>
</dbReference>
<dbReference type="GO" id="GO:0045944">
    <property type="term" value="P:positive regulation of transcription by RNA polymerase II"/>
    <property type="evidence" value="ECO:0000250"/>
    <property type="project" value="UniProtKB"/>
</dbReference>
<dbReference type="GO" id="GO:0021740">
    <property type="term" value="P:principal sensory nucleus of trigeminal nerve development"/>
    <property type="evidence" value="ECO:0000250"/>
    <property type="project" value="UniProtKB"/>
</dbReference>
<dbReference type="GO" id="GO:0060509">
    <property type="term" value="P:type I pneumocyte differentiation"/>
    <property type="evidence" value="ECO:0000250"/>
    <property type="project" value="UniProtKB"/>
</dbReference>
<dbReference type="GO" id="GO:0060510">
    <property type="term" value="P:type II pneumocyte differentiation"/>
    <property type="evidence" value="ECO:0000250"/>
    <property type="project" value="UniProtKB"/>
</dbReference>
<dbReference type="InterPro" id="IPR000647">
    <property type="entry name" value="CTF/NFI"/>
</dbReference>
<dbReference type="InterPro" id="IPR020604">
    <property type="entry name" value="CTF/NFI_DNA-bd-dom"/>
</dbReference>
<dbReference type="InterPro" id="IPR019739">
    <property type="entry name" value="CTF/NFI_DNA-bd_CS"/>
</dbReference>
<dbReference type="InterPro" id="IPR019548">
    <property type="entry name" value="CTF/NFI_DNA-bd_N"/>
</dbReference>
<dbReference type="InterPro" id="IPR003619">
    <property type="entry name" value="MAD_homology1_Dwarfin-type"/>
</dbReference>
<dbReference type="PANTHER" id="PTHR11492:SF4">
    <property type="entry name" value="NUCLEAR FACTOR 1 B-TYPE"/>
    <property type="match status" value="1"/>
</dbReference>
<dbReference type="PANTHER" id="PTHR11492">
    <property type="entry name" value="NUCLEAR FACTOR I"/>
    <property type="match status" value="1"/>
</dbReference>
<dbReference type="Pfam" id="PF00859">
    <property type="entry name" value="CTF_NFI"/>
    <property type="match status" value="1"/>
</dbReference>
<dbReference type="Pfam" id="PF03165">
    <property type="entry name" value="MH1"/>
    <property type="match status" value="1"/>
</dbReference>
<dbReference type="Pfam" id="PF10524">
    <property type="entry name" value="NfI_DNAbd_pre-N"/>
    <property type="match status" value="1"/>
</dbReference>
<dbReference type="SMART" id="SM00523">
    <property type="entry name" value="DWA"/>
    <property type="match status" value="1"/>
</dbReference>
<dbReference type="PROSITE" id="PS00349">
    <property type="entry name" value="CTF_NFI_1"/>
    <property type="match status" value="1"/>
</dbReference>
<dbReference type="PROSITE" id="PS51080">
    <property type="entry name" value="CTF_NFI_2"/>
    <property type="match status" value="1"/>
</dbReference>
<evidence type="ECO:0000250" key="1">
    <source>
        <dbReference type="UniProtKB" id="O00712"/>
    </source>
</evidence>
<evidence type="ECO:0000250" key="2">
    <source>
        <dbReference type="UniProtKB" id="P97863"/>
    </source>
</evidence>
<evidence type="ECO:0000255" key="3">
    <source>
        <dbReference type="PROSITE-ProRule" id="PRU00436"/>
    </source>
</evidence>
<evidence type="ECO:0000256" key="4">
    <source>
        <dbReference type="SAM" id="MobiDB-lite"/>
    </source>
</evidence>
<sequence length="561" mass="62718">MMYSPICLTQDEFHPFIEALLPHVRAIAYTWFNLQARKRKYFKKHEKRMSKDEERAVKDELLSEKPEIKQKWASRLLAKLRKDIRQEYREDFVLTVTGKKHPCCVLSNPDQKGKIRRIDCLRQADKVWRLDLVMVILFKGIPLESTDGERLMKSPHCTNPALCVQPHHITVSVKELDLFLAYYVQEQDSGQSGSPSHNDPAKNPPGYLEDSFVKSGVFNVSELVRVSRTPITQGTGVNFPIGEIPSQPYYHDMNSGVNLQRSLSSPPSSKRPKTISIDENMEPSPTGDFYPSPNSPAAGSRTWHERDQDMSSPTTMKKPEKPLFSSTSPQDSSPRLSTFPQHHHPGIPGVAHSVISTRTPPPPSPLPFPTQAILPPAPSSYFSHPTIRYPPHLNPQDTLKNYVPSYDPSSPQTSQPNSSGQVVGKVPGHFTPVLAPSPHPSAVRPVTLTMTDTKPITTSTEAYTASGTSQASRYVGLNPRDPSFLHQQQLRICDWTMNQNGRHLYPSTSEDTLGITWQSPGTWASLVPFQVSNRTPILPANVQNYGLNIIGEPFLQAETSN</sequence>
<accession>P13622</accession>
<comment type="function">
    <text evidence="2">Transcriptional activator of GFAP, essential for proper brain development. Recognizes and binds the palindromic sequence 5'-TTGGCNNNNNGCCAA-3' present in viral and cellular promoters and in the origin of replication of adenovirus type 2. These proteins are individually capable of activating transcription and replication.</text>
</comment>
<comment type="subunit">
    <text>Binds DNA as a homodimer.</text>
</comment>
<comment type="subcellular location">
    <subcellularLocation>
        <location>Nucleus</location>
    </subcellularLocation>
</comment>
<comment type="alternative products">
    <event type="alternative splicing"/>
    <isoform>
        <id>P13622-1</id>
        <name>1</name>
        <sequence type="displayed"/>
    </isoform>
    <text>A number of isoforms are produced.</text>
</comment>
<comment type="domain">
    <text evidence="1">The 9aaTAD motif is a transactivation domain present in a large number of yeast and animal transcription factors.</text>
</comment>
<comment type="similarity">
    <text evidence="3">Belongs to the CTF/NF-I family.</text>
</comment>
<gene>
    <name type="primary">NFIB</name>
</gene>
<feature type="chain" id="PRO_0000100196" description="Nuclear factor 1 B-type">
    <location>
        <begin position="1"/>
        <end position="561"/>
    </location>
</feature>
<feature type="DNA-binding region" description="CTF/NF-I" evidence="3">
    <location>
        <begin position="1"/>
        <end position="195"/>
    </location>
</feature>
<feature type="region of interest" description="Disordered" evidence="4">
    <location>
        <begin position="189"/>
        <end position="208"/>
    </location>
</feature>
<feature type="region of interest" description="Disordered" evidence="4">
    <location>
        <begin position="252"/>
        <end position="445"/>
    </location>
</feature>
<feature type="short sequence motif" description="9aaTAD" evidence="1">
    <location>
        <begin position="397"/>
        <end position="405"/>
    </location>
</feature>
<feature type="compositionally biased region" description="Polar residues" evidence="4">
    <location>
        <begin position="324"/>
        <end position="340"/>
    </location>
</feature>
<feature type="compositionally biased region" description="Pro residues" evidence="4">
    <location>
        <begin position="359"/>
        <end position="368"/>
    </location>
</feature>
<feature type="compositionally biased region" description="Low complexity" evidence="4">
    <location>
        <begin position="408"/>
        <end position="421"/>
    </location>
</feature>
<feature type="modified residue" description="Phosphoserine" evidence="1">
    <location>
        <position position="264"/>
    </location>
</feature>
<feature type="modified residue" description="Phosphothreonine" evidence="2">
    <location>
        <position position="286"/>
    </location>
</feature>
<feature type="modified residue" description="Phosphoserine" evidence="1">
    <location>
        <position position="292"/>
    </location>
</feature>
<feature type="modified residue" description="Phosphoserine" evidence="1">
    <location>
        <position position="295"/>
    </location>
</feature>
<feature type="modified residue" description="Phosphoserine" evidence="1">
    <location>
        <position position="312"/>
    </location>
</feature>
<feature type="modified residue" description="Phosphoserine" evidence="1">
    <location>
        <position position="328"/>
    </location>
</feature>
<feature type="modified residue" description="Phosphoserine" evidence="1">
    <location>
        <position position="333"/>
    </location>
</feature>
<feature type="modified residue" description="Asymmetric dimethylarginine" evidence="2">
    <location>
        <position position="335"/>
    </location>
</feature>
<feature type="modified residue" description="Asymmetric dimethylarginine" evidence="2">
    <location>
        <position position="388"/>
    </location>
</feature>